<sequence length="212" mass="23200">MHILVTGFAPFDNQNINPSWEAVTQLEDIIGTHTIDKLKLPTSFKKVDNIINKTLASNHYDVVLAIGQAGGRNAITPERVAINIDDARIPDNDDFQPIDQAIHLDGAPAYFSNLPVKAMTQSIINQGLPGALSNSAGTYVCNHVLYHLGYLQDKHYPHLRFGFIHVPYIPEQVIGKPDTPSMPLEKIVAGLTAAIEAISNDEDLRIALGTTE</sequence>
<comment type="function">
    <text evidence="1">Removes 5-oxoproline from various penultimate amino acid residues except L-proline.</text>
</comment>
<comment type="catalytic activity">
    <reaction evidence="1">
        <text>Release of an N-terminal pyroglutamyl group from a polypeptide, the second amino acid generally not being Pro.</text>
        <dbReference type="EC" id="3.4.19.3"/>
    </reaction>
</comment>
<comment type="subunit">
    <text evidence="1">Homotetramer.</text>
</comment>
<comment type="subcellular location">
    <subcellularLocation>
        <location evidence="1">Cytoplasm</location>
    </subcellularLocation>
</comment>
<comment type="similarity">
    <text evidence="1">Belongs to the peptidase C15 family.</text>
</comment>
<protein>
    <recommendedName>
        <fullName evidence="1">Pyrrolidone-carboxylate peptidase</fullName>
        <ecNumber evidence="1">3.4.19.3</ecNumber>
    </recommendedName>
    <alternativeName>
        <fullName evidence="1">5-oxoprolyl-peptidase</fullName>
    </alternativeName>
    <alternativeName>
        <fullName evidence="1">Pyroglutamyl-peptidase I</fullName>
        <shortName evidence="1">PGP-I</shortName>
        <shortName evidence="1">Pyrase</shortName>
    </alternativeName>
</protein>
<gene>
    <name evidence="1" type="primary">pcp</name>
    <name type="ordered locus">SA2482</name>
</gene>
<reference key="1">
    <citation type="journal article" date="2001" name="Lancet">
        <title>Whole genome sequencing of meticillin-resistant Staphylococcus aureus.</title>
        <authorList>
            <person name="Kuroda M."/>
            <person name="Ohta T."/>
            <person name="Uchiyama I."/>
            <person name="Baba T."/>
            <person name="Yuzawa H."/>
            <person name="Kobayashi I."/>
            <person name="Cui L."/>
            <person name="Oguchi A."/>
            <person name="Aoki K."/>
            <person name="Nagai Y."/>
            <person name="Lian J.-Q."/>
            <person name="Ito T."/>
            <person name="Kanamori M."/>
            <person name="Matsumaru H."/>
            <person name="Maruyama A."/>
            <person name="Murakami H."/>
            <person name="Hosoyama A."/>
            <person name="Mizutani-Ui Y."/>
            <person name="Takahashi N.K."/>
            <person name="Sawano T."/>
            <person name="Inoue R."/>
            <person name="Kaito C."/>
            <person name="Sekimizu K."/>
            <person name="Hirakawa H."/>
            <person name="Kuhara S."/>
            <person name="Goto S."/>
            <person name="Yabuzaki J."/>
            <person name="Kanehisa M."/>
            <person name="Yamashita A."/>
            <person name="Oshima K."/>
            <person name="Furuya K."/>
            <person name="Yoshino C."/>
            <person name="Shiba T."/>
            <person name="Hattori M."/>
            <person name="Ogasawara N."/>
            <person name="Hayashi H."/>
            <person name="Hiramatsu K."/>
        </authorList>
    </citation>
    <scope>NUCLEOTIDE SEQUENCE [LARGE SCALE GENOMIC DNA]</scope>
    <source>
        <strain>N315</strain>
    </source>
</reference>
<proteinExistence type="inferred from homology"/>
<organism>
    <name type="scientific">Staphylococcus aureus (strain N315)</name>
    <dbReference type="NCBI Taxonomy" id="158879"/>
    <lineage>
        <taxon>Bacteria</taxon>
        <taxon>Bacillati</taxon>
        <taxon>Bacillota</taxon>
        <taxon>Bacilli</taxon>
        <taxon>Bacillales</taxon>
        <taxon>Staphylococcaceae</taxon>
        <taxon>Staphylococcus</taxon>
    </lineage>
</organism>
<name>PCP_STAAN</name>
<keyword id="KW-0963">Cytoplasm</keyword>
<keyword id="KW-0378">Hydrolase</keyword>
<keyword id="KW-0645">Protease</keyword>
<keyword id="KW-0788">Thiol protease</keyword>
<accession>P65677</accession>
<accession>Q99QV1</accession>
<dbReference type="EC" id="3.4.19.3" evidence="1"/>
<dbReference type="EMBL" id="BA000018">
    <property type="protein sequence ID" value="BAB43788.1"/>
    <property type="molecule type" value="Genomic_DNA"/>
</dbReference>
<dbReference type="PIR" id="B90078">
    <property type="entry name" value="B90078"/>
</dbReference>
<dbReference type="RefSeq" id="WP_000547838.1">
    <property type="nucleotide sequence ID" value="NC_002745.2"/>
</dbReference>
<dbReference type="SMR" id="P65677"/>
<dbReference type="MEROPS" id="C15.001"/>
<dbReference type="EnsemblBacteria" id="BAB43788">
    <property type="protein sequence ID" value="BAB43788"/>
    <property type="gene ID" value="BAB43788"/>
</dbReference>
<dbReference type="KEGG" id="sau:SA2482"/>
<dbReference type="HOGENOM" id="CLU_043960_4_0_9"/>
<dbReference type="GO" id="GO:0005829">
    <property type="term" value="C:cytosol"/>
    <property type="evidence" value="ECO:0007669"/>
    <property type="project" value="InterPro"/>
</dbReference>
<dbReference type="GO" id="GO:0016920">
    <property type="term" value="F:pyroglutamyl-peptidase activity"/>
    <property type="evidence" value="ECO:0007669"/>
    <property type="project" value="UniProtKB-UniRule"/>
</dbReference>
<dbReference type="GO" id="GO:0006508">
    <property type="term" value="P:proteolysis"/>
    <property type="evidence" value="ECO:0007669"/>
    <property type="project" value="UniProtKB-KW"/>
</dbReference>
<dbReference type="CDD" id="cd00501">
    <property type="entry name" value="Peptidase_C15"/>
    <property type="match status" value="1"/>
</dbReference>
<dbReference type="FunFam" id="3.40.630.20:FF:000001">
    <property type="entry name" value="Pyrrolidone-carboxylate peptidase"/>
    <property type="match status" value="1"/>
</dbReference>
<dbReference type="Gene3D" id="3.40.630.20">
    <property type="entry name" value="Peptidase C15, pyroglutamyl peptidase I-like"/>
    <property type="match status" value="1"/>
</dbReference>
<dbReference type="HAMAP" id="MF_00417">
    <property type="entry name" value="Pyrrolid_peptidase"/>
    <property type="match status" value="1"/>
</dbReference>
<dbReference type="InterPro" id="IPR000816">
    <property type="entry name" value="Peptidase_C15"/>
</dbReference>
<dbReference type="InterPro" id="IPR016125">
    <property type="entry name" value="Peptidase_C15-like"/>
</dbReference>
<dbReference type="InterPro" id="IPR036440">
    <property type="entry name" value="Peptidase_C15-like_sf"/>
</dbReference>
<dbReference type="InterPro" id="IPR029762">
    <property type="entry name" value="PGP-I_bact-type"/>
</dbReference>
<dbReference type="InterPro" id="IPR033694">
    <property type="entry name" value="PGPEP1_Cys_AS"/>
</dbReference>
<dbReference type="InterPro" id="IPR033693">
    <property type="entry name" value="PGPEP1_Glu_AS"/>
</dbReference>
<dbReference type="NCBIfam" id="NF009676">
    <property type="entry name" value="PRK13197.1"/>
    <property type="match status" value="1"/>
</dbReference>
<dbReference type="NCBIfam" id="TIGR00504">
    <property type="entry name" value="pyro_pdase"/>
    <property type="match status" value="1"/>
</dbReference>
<dbReference type="PANTHER" id="PTHR23402">
    <property type="entry name" value="PROTEASE FAMILY C15 PYROGLUTAMYL-PEPTIDASE I-RELATED"/>
    <property type="match status" value="1"/>
</dbReference>
<dbReference type="PANTHER" id="PTHR23402:SF1">
    <property type="entry name" value="PYROGLUTAMYL-PEPTIDASE I"/>
    <property type="match status" value="1"/>
</dbReference>
<dbReference type="Pfam" id="PF01470">
    <property type="entry name" value="Peptidase_C15"/>
    <property type="match status" value="1"/>
</dbReference>
<dbReference type="PIRSF" id="PIRSF015592">
    <property type="entry name" value="Prld-crbxl_pptds"/>
    <property type="match status" value="1"/>
</dbReference>
<dbReference type="PRINTS" id="PR00706">
    <property type="entry name" value="PYROGLUPTASE"/>
</dbReference>
<dbReference type="SUPFAM" id="SSF53182">
    <property type="entry name" value="Pyrrolidone carboxyl peptidase (pyroglutamate aminopeptidase)"/>
    <property type="match status" value="1"/>
</dbReference>
<dbReference type="PROSITE" id="PS01334">
    <property type="entry name" value="PYRASE_CYS"/>
    <property type="match status" value="1"/>
</dbReference>
<dbReference type="PROSITE" id="PS01333">
    <property type="entry name" value="PYRASE_GLU"/>
    <property type="match status" value="1"/>
</dbReference>
<feature type="chain" id="PRO_0000184733" description="Pyrrolidone-carboxylate peptidase">
    <location>
        <begin position="1"/>
        <end position="212"/>
    </location>
</feature>
<feature type="active site" evidence="1">
    <location>
        <position position="78"/>
    </location>
</feature>
<feature type="active site" evidence="1">
    <location>
        <position position="141"/>
    </location>
</feature>
<feature type="active site" evidence="1">
    <location>
        <position position="165"/>
    </location>
</feature>
<evidence type="ECO:0000255" key="1">
    <source>
        <dbReference type="HAMAP-Rule" id="MF_00417"/>
    </source>
</evidence>